<name>ERG2_NEUCR</name>
<reference key="1">
    <citation type="submission" date="1996-05" db="EMBL/GenBank/DDBJ databases">
        <authorList>
            <person name="Gilbert J."/>
            <person name="Orbach M.J."/>
        </authorList>
    </citation>
    <scope>NUCLEOTIDE SEQUENCE [GENOMIC DNA]</scope>
    <source>
        <strain>ATCC 24698 / 74-OR23-1A / CBS 708.71 / DSM 1257 / FGSC 987</strain>
    </source>
</reference>
<reference key="2">
    <citation type="journal article" date="2003" name="Nucleic Acids Res.">
        <title>What's in the genome of a filamentous fungus? Analysis of the Neurospora genome sequence.</title>
        <authorList>
            <person name="Mannhaupt G."/>
            <person name="Montrone C."/>
            <person name="Haase D."/>
            <person name="Mewes H.-W."/>
            <person name="Aign V."/>
            <person name="Hoheisel J.D."/>
            <person name="Fartmann B."/>
            <person name="Nyakatura G."/>
            <person name="Kempken F."/>
            <person name="Maier J."/>
            <person name="Schulte U."/>
        </authorList>
    </citation>
    <scope>NUCLEOTIDE SEQUENCE [LARGE SCALE GENOMIC DNA]</scope>
    <source>
        <strain>ATCC 24698 / 74-OR23-1A / CBS 708.71 / DSM 1257 / FGSC 987</strain>
    </source>
</reference>
<reference key="3">
    <citation type="journal article" date="2003" name="Nature">
        <title>The genome sequence of the filamentous fungus Neurospora crassa.</title>
        <authorList>
            <person name="Galagan J.E."/>
            <person name="Calvo S.E."/>
            <person name="Borkovich K.A."/>
            <person name="Selker E.U."/>
            <person name="Read N.D."/>
            <person name="Jaffe D.B."/>
            <person name="FitzHugh W."/>
            <person name="Ma L.-J."/>
            <person name="Smirnov S."/>
            <person name="Purcell S."/>
            <person name="Rehman B."/>
            <person name="Elkins T."/>
            <person name="Engels R."/>
            <person name="Wang S."/>
            <person name="Nielsen C.B."/>
            <person name="Butler J."/>
            <person name="Endrizzi M."/>
            <person name="Qui D."/>
            <person name="Ianakiev P."/>
            <person name="Bell-Pedersen D."/>
            <person name="Nelson M.A."/>
            <person name="Werner-Washburne M."/>
            <person name="Selitrennikoff C.P."/>
            <person name="Kinsey J.A."/>
            <person name="Braun E.L."/>
            <person name="Zelter A."/>
            <person name="Schulte U."/>
            <person name="Kothe G.O."/>
            <person name="Jedd G."/>
            <person name="Mewes H.-W."/>
            <person name="Staben C."/>
            <person name="Marcotte E."/>
            <person name="Greenberg D."/>
            <person name="Roy A."/>
            <person name="Foley K."/>
            <person name="Naylor J."/>
            <person name="Stange-Thomann N."/>
            <person name="Barrett R."/>
            <person name="Gnerre S."/>
            <person name="Kamal M."/>
            <person name="Kamvysselis M."/>
            <person name="Mauceli E.W."/>
            <person name="Bielke C."/>
            <person name="Rudd S."/>
            <person name="Frishman D."/>
            <person name="Krystofova S."/>
            <person name="Rasmussen C."/>
            <person name="Metzenberg R.L."/>
            <person name="Perkins D.D."/>
            <person name="Kroken S."/>
            <person name="Cogoni C."/>
            <person name="Macino G."/>
            <person name="Catcheside D.E.A."/>
            <person name="Li W."/>
            <person name="Pratt R.J."/>
            <person name="Osmani S.A."/>
            <person name="DeSouza C.P.C."/>
            <person name="Glass N.L."/>
            <person name="Orbach M.J."/>
            <person name="Berglund J.A."/>
            <person name="Voelker R."/>
            <person name="Yarden O."/>
            <person name="Plamann M."/>
            <person name="Seiler S."/>
            <person name="Dunlap J.C."/>
            <person name="Radford A."/>
            <person name="Aramayo R."/>
            <person name="Natvig D.O."/>
            <person name="Alex L.A."/>
            <person name="Mannhaupt G."/>
            <person name="Ebbole D.J."/>
            <person name="Freitag M."/>
            <person name="Paulsen I."/>
            <person name="Sachs M.S."/>
            <person name="Lander E.S."/>
            <person name="Nusbaum C."/>
            <person name="Birren B.W."/>
        </authorList>
    </citation>
    <scope>NUCLEOTIDE SEQUENCE [LARGE SCALE GENOMIC DNA]</scope>
    <source>
        <strain>ATCC 24698 / 74-OR23-1A / CBS 708.71 / DSM 1257 / FGSC 987</strain>
    </source>
</reference>
<evidence type="ECO:0000250" key="1"/>
<evidence type="ECO:0000255" key="2"/>
<evidence type="ECO:0000256" key="3">
    <source>
        <dbReference type="SAM" id="MobiDB-lite"/>
    </source>
</evidence>
<evidence type="ECO:0000305" key="4"/>
<dbReference type="EC" id="5.-.-.-"/>
<dbReference type="EMBL" id="U59671">
    <property type="protein sequence ID" value="AAB09470.1"/>
    <property type="molecule type" value="Genomic_DNA"/>
</dbReference>
<dbReference type="EMBL" id="AL513463">
    <property type="protein sequence ID" value="CAC28749.1"/>
    <property type="molecule type" value="Genomic_DNA"/>
</dbReference>
<dbReference type="EMBL" id="CM002240">
    <property type="protein sequence ID" value="EAA32076.2"/>
    <property type="molecule type" value="Genomic_DNA"/>
</dbReference>
<dbReference type="PIR" id="T46871">
    <property type="entry name" value="T46871"/>
</dbReference>
<dbReference type="RefSeq" id="XP_961312.2">
    <property type="nucleotide sequence ID" value="XM_956219.3"/>
</dbReference>
<dbReference type="SMR" id="Q92254"/>
<dbReference type="FunCoup" id="Q92254">
    <property type="interactions" value="139"/>
</dbReference>
<dbReference type="STRING" id="367110.Q92254"/>
<dbReference type="PaxDb" id="5141-EFNCRP00000003843"/>
<dbReference type="EnsemblFungi" id="EAA32076">
    <property type="protein sequence ID" value="EAA32076"/>
    <property type="gene ID" value="NCU04156"/>
</dbReference>
<dbReference type="GeneID" id="3877419"/>
<dbReference type="KEGG" id="ncr:NCU04156"/>
<dbReference type="VEuPathDB" id="FungiDB:NCU04156"/>
<dbReference type="HOGENOM" id="CLU_085469_0_0_1"/>
<dbReference type="InParanoid" id="Q92254"/>
<dbReference type="OMA" id="AMYVIHA"/>
<dbReference type="OrthoDB" id="347124at2759"/>
<dbReference type="UniPathway" id="UPA00768">
    <property type="reaction ID" value="UER00761"/>
</dbReference>
<dbReference type="Proteomes" id="UP000001805">
    <property type="component" value="Chromosome 2, Linkage Group V"/>
</dbReference>
<dbReference type="GO" id="GO:0005783">
    <property type="term" value="C:endoplasmic reticulum"/>
    <property type="evidence" value="ECO:0000318"/>
    <property type="project" value="GO_Central"/>
</dbReference>
<dbReference type="GO" id="GO:0005789">
    <property type="term" value="C:endoplasmic reticulum membrane"/>
    <property type="evidence" value="ECO:0007669"/>
    <property type="project" value="UniProtKB-SubCell"/>
</dbReference>
<dbReference type="GO" id="GO:0016853">
    <property type="term" value="F:isomerase activity"/>
    <property type="evidence" value="ECO:0007669"/>
    <property type="project" value="UniProtKB-KW"/>
</dbReference>
<dbReference type="GO" id="GO:0006696">
    <property type="term" value="P:ergosterol biosynthetic process"/>
    <property type="evidence" value="ECO:0000318"/>
    <property type="project" value="GO_Central"/>
</dbReference>
<dbReference type="InterPro" id="IPR006716">
    <property type="entry name" value="ERG2_sigma1_rcpt-like"/>
</dbReference>
<dbReference type="PANTHER" id="PTHR10868">
    <property type="entry name" value="SIGMA 1-TYPE OPIOID RECEPTOR-RELATED"/>
    <property type="match status" value="1"/>
</dbReference>
<dbReference type="PANTHER" id="PTHR10868:SF1">
    <property type="entry name" value="SIGMA NON-OPIOID INTRACELLULAR RECEPTOR 1"/>
    <property type="match status" value="1"/>
</dbReference>
<dbReference type="Pfam" id="PF04622">
    <property type="entry name" value="ERG2_Sigma1R"/>
    <property type="match status" value="1"/>
</dbReference>
<proteinExistence type="inferred from homology"/>
<protein>
    <recommendedName>
        <fullName>C-8 sterol isomerase</fullName>
        <ecNumber>5.-.-.-</ecNumber>
    </recommendedName>
    <alternativeName>
        <fullName>Delta-8--delta-7 sterol isomerase</fullName>
    </alternativeName>
</protein>
<organism>
    <name type="scientific">Neurospora crassa (strain ATCC 24698 / 74-OR23-1A / CBS 708.71 / DSM 1257 / FGSC 987)</name>
    <dbReference type="NCBI Taxonomy" id="367110"/>
    <lineage>
        <taxon>Eukaryota</taxon>
        <taxon>Fungi</taxon>
        <taxon>Dikarya</taxon>
        <taxon>Ascomycota</taxon>
        <taxon>Pezizomycotina</taxon>
        <taxon>Sordariomycetes</taxon>
        <taxon>Sordariomycetidae</taxon>
        <taxon>Sordariales</taxon>
        <taxon>Sordariaceae</taxon>
        <taxon>Neurospora</taxon>
    </lineage>
</organism>
<keyword id="KW-0256">Endoplasmic reticulum</keyword>
<keyword id="KW-0413">Isomerase</keyword>
<keyword id="KW-0444">Lipid biosynthesis</keyword>
<keyword id="KW-0443">Lipid metabolism</keyword>
<keyword id="KW-0472">Membrane</keyword>
<keyword id="KW-1185">Reference proteome</keyword>
<keyword id="KW-0752">Steroid biosynthesis</keyword>
<keyword id="KW-0753">Steroid metabolism</keyword>
<keyword id="KW-0756">Sterol biosynthesis</keyword>
<keyword id="KW-1207">Sterol metabolism</keyword>
<keyword id="KW-0812">Transmembrane</keyword>
<keyword id="KW-1133">Transmembrane helix</keyword>
<comment type="function">
    <text>Catalyzes the reaction which results in unsaturation at C-7 in the B ring of sterols.</text>
</comment>
<comment type="pathway">
    <text>Steroid metabolism; ergosterol biosynthesis; ergosterol from zymosterol: step 2/5.</text>
</comment>
<comment type="subcellular location">
    <subcellularLocation>
        <location evidence="1">Endoplasmic reticulum membrane</location>
        <topology evidence="1">Single-pass membrane protein</topology>
    </subcellularLocation>
</comment>
<comment type="similarity">
    <text evidence="4">Belongs to the ERG2 family.</text>
</comment>
<gene>
    <name type="primary">erg-1</name>
    <name type="ORF">9G6.010</name>
    <name type="ORF">NCU04156</name>
</gene>
<feature type="chain" id="PRO_0000087018" description="C-8 sterol isomerase">
    <location>
        <begin position="1"/>
        <end position="256"/>
    </location>
</feature>
<feature type="transmembrane region" description="Helical" evidence="2">
    <location>
        <begin position="40"/>
        <end position="60"/>
    </location>
</feature>
<feature type="region of interest" description="Disordered" evidence="3">
    <location>
        <begin position="1"/>
        <end position="31"/>
    </location>
</feature>
<feature type="compositionally biased region" description="Low complexity" evidence="3">
    <location>
        <begin position="7"/>
        <end position="30"/>
    </location>
</feature>
<feature type="sequence conflict" description="In Ref. 1; AAB09470." evidence="4" ref="1">
    <original>A</original>
    <variation>R</variation>
    <location>
        <position position="86"/>
    </location>
</feature>
<feature type="sequence conflict" description="In Ref. 1; AAB09470." evidence="4" ref="1">
    <original>A</original>
    <variation>P</variation>
    <location>
        <position position="211"/>
    </location>
</feature>
<sequence length="256" mass="28246">MPPKKQSSSGGNKPSGSGSSSGRSSSGSSCRCSCRCRCSIGGWLKFFAILFALVAPIAYVLEQRLESFYVFDTEHLHDLSKRAISAHGNDTKAIVKYIVDELNDRNGVAPYVNNDEEWVFNNAGGAMGAMYIIHASITEYLIIFGTAIGTEGHTGRHTADDYFHILTGTQTAYVPGEYEPEVYPPGSVHHLVRGTVKQYRMPESCFALEYARGWIPPMLFFGYADTLSSTLDFPTLWRTSVITGREMISNLLKGKF</sequence>
<accession>Q92254</accession>
<accession>Q7RVD2</accession>
<accession>Q9C2G3</accession>